<dbReference type="EMBL" id="X99310">
    <property type="protein sequence ID" value="CAA67688.1"/>
    <property type="molecule type" value="mRNA"/>
</dbReference>
<dbReference type="RefSeq" id="NP_001165165.1">
    <property type="nucleotide sequence ID" value="NM_001171694.1"/>
</dbReference>
<dbReference type="GeneID" id="100329123"/>
<dbReference type="CTD" id="100329123"/>
<dbReference type="Proteomes" id="UP000186698">
    <property type="component" value="Unplaced"/>
</dbReference>
<dbReference type="GO" id="GO:1990907">
    <property type="term" value="C:beta-catenin-TCF complex"/>
    <property type="evidence" value="ECO:0000318"/>
    <property type="project" value="GO_Central"/>
</dbReference>
<dbReference type="GO" id="GO:0000785">
    <property type="term" value="C:chromatin"/>
    <property type="evidence" value="ECO:0000318"/>
    <property type="project" value="GO_Central"/>
</dbReference>
<dbReference type="GO" id="GO:0000981">
    <property type="term" value="F:DNA-binding transcription factor activity, RNA polymerase II-specific"/>
    <property type="evidence" value="ECO:0000318"/>
    <property type="project" value="GO_Central"/>
</dbReference>
<dbReference type="GO" id="GO:0000978">
    <property type="term" value="F:RNA polymerase II cis-regulatory region sequence-specific DNA binding"/>
    <property type="evidence" value="ECO:0000318"/>
    <property type="project" value="GO_Central"/>
</dbReference>
<dbReference type="GO" id="GO:0060070">
    <property type="term" value="P:canonical Wnt signaling pathway"/>
    <property type="evidence" value="ECO:0000318"/>
    <property type="project" value="GO_Central"/>
</dbReference>
<dbReference type="GO" id="GO:0006357">
    <property type="term" value="P:regulation of transcription by RNA polymerase II"/>
    <property type="evidence" value="ECO:0000318"/>
    <property type="project" value="GO_Central"/>
</dbReference>
<dbReference type="CDD" id="cd21996">
    <property type="entry name" value="HMG-box_TCF7-like"/>
    <property type="match status" value="1"/>
</dbReference>
<dbReference type="FunFam" id="1.10.30.10:FF:000001">
    <property type="entry name" value="transcription factor 7 isoform X2"/>
    <property type="match status" value="1"/>
</dbReference>
<dbReference type="FunFam" id="4.10.900.10:FF:000002">
    <property type="entry name" value="transcription factor 7-like 2 isoform X1"/>
    <property type="match status" value="1"/>
</dbReference>
<dbReference type="Gene3D" id="1.10.30.10">
    <property type="entry name" value="High mobility group box domain"/>
    <property type="match status" value="1"/>
</dbReference>
<dbReference type="Gene3D" id="4.10.900.10">
    <property type="entry name" value="TCF3-CBD (Catenin binding domain)"/>
    <property type="match status" value="1"/>
</dbReference>
<dbReference type="InterPro" id="IPR027397">
    <property type="entry name" value="Catenin-bd_sf"/>
</dbReference>
<dbReference type="InterPro" id="IPR013558">
    <property type="entry name" value="CTNNB1-bd_N"/>
</dbReference>
<dbReference type="InterPro" id="IPR009071">
    <property type="entry name" value="HMG_box_dom"/>
</dbReference>
<dbReference type="InterPro" id="IPR036910">
    <property type="entry name" value="HMG_box_dom_sf"/>
</dbReference>
<dbReference type="InterPro" id="IPR024940">
    <property type="entry name" value="TCF/LEF"/>
</dbReference>
<dbReference type="PANTHER" id="PTHR10373">
    <property type="entry name" value="TRANSCRIPTION FACTOR 7 FAMILY MEMBER"/>
    <property type="match status" value="1"/>
</dbReference>
<dbReference type="PANTHER" id="PTHR10373:SF25">
    <property type="entry name" value="TRANSCRIPTION FACTOR 7-LIKE 1"/>
    <property type="match status" value="1"/>
</dbReference>
<dbReference type="Pfam" id="PF08347">
    <property type="entry name" value="CTNNB1_binding"/>
    <property type="match status" value="1"/>
</dbReference>
<dbReference type="Pfam" id="PF00505">
    <property type="entry name" value="HMG_box"/>
    <property type="match status" value="1"/>
</dbReference>
<dbReference type="SMART" id="SM00398">
    <property type="entry name" value="HMG"/>
    <property type="match status" value="1"/>
</dbReference>
<dbReference type="SUPFAM" id="SSF47095">
    <property type="entry name" value="HMG-box"/>
    <property type="match status" value="1"/>
</dbReference>
<dbReference type="PROSITE" id="PS50118">
    <property type="entry name" value="HMG_BOX_2"/>
    <property type="match status" value="1"/>
</dbReference>
<keyword id="KW-0010">Activator</keyword>
<keyword id="KW-0217">Developmental protein</keyword>
<keyword id="KW-0238">DNA-binding</keyword>
<keyword id="KW-0539">Nucleus</keyword>
<keyword id="KW-0597">Phosphoprotein</keyword>
<keyword id="KW-1185">Reference proteome</keyword>
<keyword id="KW-0678">Repressor</keyword>
<keyword id="KW-0804">Transcription</keyword>
<keyword id="KW-0805">Transcription regulation</keyword>
<keyword id="KW-0879">Wnt signaling pathway</keyword>
<proteinExistence type="evidence at transcript level"/>
<accession>P70064</accession>
<organism>
    <name type="scientific">Xenopus laevis</name>
    <name type="common">African clawed frog</name>
    <dbReference type="NCBI Taxonomy" id="8355"/>
    <lineage>
        <taxon>Eukaryota</taxon>
        <taxon>Metazoa</taxon>
        <taxon>Chordata</taxon>
        <taxon>Craniata</taxon>
        <taxon>Vertebrata</taxon>
        <taxon>Euteleostomi</taxon>
        <taxon>Amphibia</taxon>
        <taxon>Batrachia</taxon>
        <taxon>Anura</taxon>
        <taxon>Pipoidea</taxon>
        <taxon>Pipidae</taxon>
        <taxon>Xenopodinae</taxon>
        <taxon>Xenopus</taxon>
        <taxon>Xenopus</taxon>
    </lineage>
</organism>
<sequence>MPQLNSGXGDELGANDELIRFKDEGEQEEKSPGEGSAEGDLADVKSSLVNESENHSSDSDSEVERRPPPRETFEKPRDYLSEAFRRQQDAAFFKGPPYAGYPFLMIPDLGGITCPMVPSHPALAYLQMKWPLLDSPSTAGLKDARSPSPAHLSNKVPVVQHPHHMHPLTPLITYSNEHFSPGTPPGHLSPEIDPKTGIPRPPHPSELSPYYPLSPGAVGQIPHPLGWLVPQQGQPMYSIPPGGFRHPYPALAMNASMSSLVSSRFSPHMVPPPHHSLHTSGIPHPAIVSPIVKQEPSSGNISPNLSMKSNVVVKKEEEKKPHIKKPLNAFMLYMKEMRAKVVAECTLKESAAINQILGRRWHSLSREEQAKYYELARKERQLHSQLYPSWSARDNYGKKKKRKREKQSPEMENYTKTKKMCVQHFPSDKSCDSPASSHGSMLDSPATPSAALASPREPAATHSEEAQPLSLTTKPEARALSHSAAFLASKSPSSSSLSGHLPSPVGSPLLSRPIPLTSSILSPPGVFPPALQALPLLQAQPLPLVARSSD</sequence>
<gene>
    <name type="primary">tcf7l1-d</name>
    <name type="synonym">tcf3d</name>
</gene>
<reference key="1">
    <citation type="journal article" date="1996" name="Cell">
        <title>XTcf-3 transcription factor mediates beta-catenin-induced axis formation in Xenopus embryos.</title>
        <authorList>
            <person name="Molenaar M."/>
            <person name="van de Wetering M."/>
            <person name="Peterson-Maduro J."/>
            <person name="Godsave S."/>
            <person name="Korinkek V."/>
            <person name="Roose J."/>
            <person name="Destree O."/>
            <person name="Clevers H."/>
        </authorList>
    </citation>
    <scope>NUCLEOTIDE SEQUENCE [MRNA]</scope>
</reference>
<comment type="function">
    <text evidence="1">Participates in the Wnt signaling pathway. Binds to DNA and acts as a repressor in the absence of ctnnb1-A and possibly ctnnb1-B, and as an activator in the presence of these proteins. Required early in development for the establishment of the dorsal body axis in response to maternal Wnt signaling (By similarity).</text>
</comment>
<comment type="subunit">
    <text evidence="1">Interacts with csnk1e, ctnnb1-A, ctbp-B, dact1-A and gsk3b. May interact with ase and tle4-A (By similarity).</text>
</comment>
<comment type="subcellular location">
    <subcellularLocation>
        <location evidence="2">Nucleus</location>
    </subcellularLocation>
</comment>
<comment type="PTM">
    <text evidence="1">Phosphorylated. Phosphorylation by csnk1e promotes binding to ctnnb1-A while phosphorylation by gsk3b may reverse this effect (By similarity).</text>
</comment>
<comment type="similarity">
    <text evidence="4">Belongs to the TCF/LEF family.</text>
</comment>
<feature type="chain" id="PRO_0000048619" description="Transcription factor 7-like 1-D">
    <location>
        <begin position="1"/>
        <end position="550"/>
    </location>
</feature>
<feature type="DNA-binding region" description="HMG box" evidence="2">
    <location>
        <begin position="323"/>
        <end position="391"/>
    </location>
</feature>
<feature type="region of interest" description="Disordered" evidence="3">
    <location>
        <begin position="1"/>
        <end position="77"/>
    </location>
</feature>
<feature type="region of interest" description="Interaction with CTNNB1-A" evidence="1">
    <location>
        <begin position="1"/>
        <end position="61"/>
    </location>
</feature>
<feature type="region of interest" description="Interaction with AES and TLE4-A" evidence="1">
    <location>
        <begin position="109"/>
        <end position="311"/>
    </location>
</feature>
<feature type="region of interest" description="Disordered" evidence="3">
    <location>
        <begin position="182"/>
        <end position="212"/>
    </location>
</feature>
<feature type="region of interest" description="Disordered" evidence="3">
    <location>
        <begin position="390"/>
        <end position="473"/>
    </location>
</feature>
<feature type="region of interest" description="Interaction with CTBP-B" evidence="1">
    <location>
        <begin position="407"/>
        <end position="550"/>
    </location>
</feature>
<feature type="region of interest" description="Disordered" evidence="3">
    <location>
        <begin position="488"/>
        <end position="514"/>
    </location>
</feature>
<feature type="compositionally biased region" description="Basic and acidic residues" evidence="3">
    <location>
        <begin position="17"/>
        <end position="32"/>
    </location>
</feature>
<feature type="compositionally biased region" description="Basic and acidic residues" evidence="3">
    <location>
        <begin position="52"/>
        <end position="77"/>
    </location>
</feature>
<feature type="compositionally biased region" description="Basic and acidic residues" evidence="3">
    <location>
        <begin position="406"/>
        <end position="415"/>
    </location>
</feature>
<feature type="compositionally biased region" description="Low complexity" evidence="3">
    <location>
        <begin position="444"/>
        <end position="455"/>
    </location>
</feature>
<name>T7L1D_XENLA</name>
<evidence type="ECO:0000250" key="1"/>
<evidence type="ECO:0000255" key="2">
    <source>
        <dbReference type="PROSITE-ProRule" id="PRU00267"/>
    </source>
</evidence>
<evidence type="ECO:0000256" key="3">
    <source>
        <dbReference type="SAM" id="MobiDB-lite"/>
    </source>
</evidence>
<evidence type="ECO:0000305" key="4"/>
<protein>
    <recommendedName>
        <fullName>Transcription factor 7-like 1-D</fullName>
    </recommendedName>
    <alternativeName>
        <fullName>HMG box transcription factor 3-D</fullName>
        <shortName>TCF-3-D</shortName>
        <shortName>xTcf-3d</shortName>
    </alternativeName>
</protein>